<organism>
    <name type="scientific">Pseudomonas putida (strain ATCC 47054 / DSM 6125 / CFBP 8728 / NCIMB 11950 / KT2440)</name>
    <dbReference type="NCBI Taxonomy" id="160488"/>
    <lineage>
        <taxon>Bacteria</taxon>
        <taxon>Pseudomonadati</taxon>
        <taxon>Pseudomonadota</taxon>
        <taxon>Gammaproteobacteria</taxon>
        <taxon>Pseudomonadales</taxon>
        <taxon>Pseudomonadaceae</taxon>
        <taxon>Pseudomonas</taxon>
    </lineage>
</organism>
<evidence type="ECO:0000255" key="1">
    <source>
        <dbReference type="HAMAP-Rule" id="MF_01396"/>
    </source>
</evidence>
<comment type="function">
    <text evidence="1">F(1)F(0) ATP synthase produces ATP from ADP in the presence of a proton or sodium gradient. F-type ATPases consist of two structural domains, F(1) containing the extramembraneous catalytic core and F(0) containing the membrane proton channel, linked together by a central stalk and a peripheral stalk. During catalysis, ATP synthesis in the catalytic domain of F(1) is coupled via a rotary mechanism of the central stalk subunits to proton translocation.</text>
</comment>
<comment type="function">
    <text evidence="1">Key component of the F(0) channel; it plays a direct role in translocation across the membrane. A homomeric c-ring of between 10-14 subunits forms the central stalk rotor element with the F(1) delta and epsilon subunits.</text>
</comment>
<comment type="subunit">
    <text evidence="1">F-type ATPases have 2 components, F(1) - the catalytic core - and F(0) - the membrane proton channel. F(1) has five subunits: alpha(3), beta(3), gamma(1), delta(1), epsilon(1). F(0) has three main subunits: a(1), b(2) and c(10-14). The alpha and beta chains form an alternating ring which encloses part of the gamma chain. F(1) is attached to F(0) by a central stalk formed by the gamma and epsilon chains, while a peripheral stalk is formed by the delta and b chains.</text>
</comment>
<comment type="subcellular location">
    <subcellularLocation>
        <location evidence="1">Cell inner membrane</location>
        <topology evidence="1">Multi-pass membrane protein</topology>
    </subcellularLocation>
</comment>
<comment type="similarity">
    <text evidence="1">Belongs to the ATPase C chain family.</text>
</comment>
<proteinExistence type="inferred from homology"/>
<accession>Q88BW9</accession>
<feature type="chain" id="PRO_1000184444" description="ATP synthase subunit c">
    <location>
        <begin position="1"/>
        <end position="85"/>
    </location>
</feature>
<feature type="transmembrane region" description="Helical" evidence="1">
    <location>
        <begin position="10"/>
        <end position="30"/>
    </location>
</feature>
<feature type="transmembrane region" description="Helical" evidence="1">
    <location>
        <begin position="53"/>
        <end position="73"/>
    </location>
</feature>
<feature type="site" description="Reversibly protonated during proton transport" evidence="1">
    <location>
        <position position="60"/>
    </location>
</feature>
<gene>
    <name evidence="1" type="primary">atpE</name>
    <name type="ordered locus">PP_5418</name>
    <name type="ORF">PP5418</name>
</gene>
<reference key="1">
    <citation type="journal article" date="2002" name="Environ. Microbiol.">
        <title>Complete genome sequence and comparative analysis of the metabolically versatile Pseudomonas putida KT2440.</title>
        <authorList>
            <person name="Nelson K.E."/>
            <person name="Weinel C."/>
            <person name="Paulsen I.T."/>
            <person name="Dodson R.J."/>
            <person name="Hilbert H."/>
            <person name="Martins dos Santos V.A.P."/>
            <person name="Fouts D.E."/>
            <person name="Gill S.R."/>
            <person name="Pop M."/>
            <person name="Holmes M."/>
            <person name="Brinkac L.M."/>
            <person name="Beanan M.J."/>
            <person name="DeBoy R.T."/>
            <person name="Daugherty S.C."/>
            <person name="Kolonay J.F."/>
            <person name="Madupu R."/>
            <person name="Nelson W.C."/>
            <person name="White O."/>
            <person name="Peterson J.D."/>
            <person name="Khouri H.M."/>
            <person name="Hance I."/>
            <person name="Chris Lee P."/>
            <person name="Holtzapple E.K."/>
            <person name="Scanlan D."/>
            <person name="Tran K."/>
            <person name="Moazzez A."/>
            <person name="Utterback T.R."/>
            <person name="Rizzo M."/>
            <person name="Lee K."/>
            <person name="Kosack D."/>
            <person name="Moestl D."/>
            <person name="Wedler H."/>
            <person name="Lauber J."/>
            <person name="Stjepandic D."/>
            <person name="Hoheisel J."/>
            <person name="Straetz M."/>
            <person name="Heim S."/>
            <person name="Kiewitz C."/>
            <person name="Eisen J.A."/>
            <person name="Timmis K.N."/>
            <person name="Duesterhoeft A."/>
            <person name="Tuemmler B."/>
            <person name="Fraser C.M."/>
        </authorList>
    </citation>
    <scope>NUCLEOTIDE SEQUENCE [LARGE SCALE GENOMIC DNA]</scope>
    <source>
        <strain>ATCC 47054 / DSM 6125 / CFBP 8728 / NCIMB 11950 / KT2440</strain>
    </source>
</reference>
<sequence length="85" mass="8608">METVVGLTAIAVALLIGLGALGTAIGFGLLGGKFLEGAARQPEMVPMLQVKMFIVAGLLDAVTMIGVGIALFFTFANPFVGQIAG</sequence>
<protein>
    <recommendedName>
        <fullName evidence="1">ATP synthase subunit c</fullName>
    </recommendedName>
    <alternativeName>
        <fullName evidence="1">ATP synthase F(0) sector subunit c</fullName>
    </alternativeName>
    <alternativeName>
        <fullName evidence="1">F-type ATPase subunit c</fullName>
        <shortName evidence="1">F-ATPase subunit c</shortName>
    </alternativeName>
    <alternativeName>
        <fullName evidence="1">Lipid-binding protein</fullName>
    </alternativeName>
</protein>
<keyword id="KW-0066">ATP synthesis</keyword>
<keyword id="KW-0997">Cell inner membrane</keyword>
<keyword id="KW-1003">Cell membrane</keyword>
<keyword id="KW-0138">CF(0)</keyword>
<keyword id="KW-0375">Hydrogen ion transport</keyword>
<keyword id="KW-0406">Ion transport</keyword>
<keyword id="KW-0446">Lipid-binding</keyword>
<keyword id="KW-0472">Membrane</keyword>
<keyword id="KW-1185">Reference proteome</keyword>
<keyword id="KW-0812">Transmembrane</keyword>
<keyword id="KW-1133">Transmembrane helix</keyword>
<keyword id="KW-0813">Transport</keyword>
<dbReference type="EMBL" id="AE015451">
    <property type="protein sequence ID" value="AAN70982.1"/>
    <property type="molecule type" value="Genomic_DNA"/>
</dbReference>
<dbReference type="RefSeq" id="NP_747518.1">
    <property type="nucleotide sequence ID" value="NC_002947.4"/>
</dbReference>
<dbReference type="RefSeq" id="WP_003097235.1">
    <property type="nucleotide sequence ID" value="NZ_CP169744.1"/>
</dbReference>
<dbReference type="SMR" id="Q88BW9"/>
<dbReference type="STRING" id="160488.PP_5418"/>
<dbReference type="PaxDb" id="160488-PP_5418"/>
<dbReference type="GeneID" id="98280758"/>
<dbReference type="KEGG" id="ppu:PP_5418"/>
<dbReference type="PATRIC" id="fig|160488.4.peg.5786"/>
<dbReference type="eggNOG" id="ENOG5032S3K">
    <property type="taxonomic scope" value="Bacteria"/>
</dbReference>
<dbReference type="HOGENOM" id="CLU_148047_1_0_6"/>
<dbReference type="OrthoDB" id="9811659at2"/>
<dbReference type="PhylomeDB" id="Q88BW9"/>
<dbReference type="BioCyc" id="PPUT160488:G1G01-5784-MONOMER"/>
<dbReference type="PRO" id="PR:Q88BW9"/>
<dbReference type="Proteomes" id="UP000000556">
    <property type="component" value="Chromosome"/>
</dbReference>
<dbReference type="GO" id="GO:0005886">
    <property type="term" value="C:plasma membrane"/>
    <property type="evidence" value="ECO:0007669"/>
    <property type="project" value="UniProtKB-SubCell"/>
</dbReference>
<dbReference type="GO" id="GO:0045259">
    <property type="term" value="C:proton-transporting ATP synthase complex"/>
    <property type="evidence" value="ECO:0007669"/>
    <property type="project" value="UniProtKB-KW"/>
</dbReference>
<dbReference type="GO" id="GO:0033177">
    <property type="term" value="C:proton-transporting two-sector ATPase complex, proton-transporting domain"/>
    <property type="evidence" value="ECO:0007669"/>
    <property type="project" value="InterPro"/>
</dbReference>
<dbReference type="GO" id="GO:0008289">
    <property type="term" value="F:lipid binding"/>
    <property type="evidence" value="ECO:0007669"/>
    <property type="project" value="UniProtKB-KW"/>
</dbReference>
<dbReference type="GO" id="GO:0046933">
    <property type="term" value="F:proton-transporting ATP synthase activity, rotational mechanism"/>
    <property type="evidence" value="ECO:0007669"/>
    <property type="project" value="UniProtKB-UniRule"/>
</dbReference>
<dbReference type="CDD" id="cd18185">
    <property type="entry name" value="ATP-synt_Fo_c_ATPE"/>
    <property type="match status" value="1"/>
</dbReference>
<dbReference type="FunFam" id="1.20.20.10:FF:000002">
    <property type="entry name" value="ATP synthase subunit c"/>
    <property type="match status" value="1"/>
</dbReference>
<dbReference type="Gene3D" id="1.20.20.10">
    <property type="entry name" value="F1F0 ATP synthase subunit C"/>
    <property type="match status" value="1"/>
</dbReference>
<dbReference type="HAMAP" id="MF_01396">
    <property type="entry name" value="ATP_synth_c_bact"/>
    <property type="match status" value="1"/>
</dbReference>
<dbReference type="InterPro" id="IPR005953">
    <property type="entry name" value="ATP_synth_csu_bac/chlpt"/>
</dbReference>
<dbReference type="InterPro" id="IPR000454">
    <property type="entry name" value="ATP_synth_F0_csu"/>
</dbReference>
<dbReference type="InterPro" id="IPR020537">
    <property type="entry name" value="ATP_synth_F0_csu_DDCD_BS"/>
</dbReference>
<dbReference type="InterPro" id="IPR038662">
    <property type="entry name" value="ATP_synth_F0_csu_sf"/>
</dbReference>
<dbReference type="InterPro" id="IPR002379">
    <property type="entry name" value="ATPase_proteolipid_c-like_dom"/>
</dbReference>
<dbReference type="InterPro" id="IPR035921">
    <property type="entry name" value="F/V-ATP_Csub_sf"/>
</dbReference>
<dbReference type="NCBIfam" id="TIGR01260">
    <property type="entry name" value="ATP_synt_c"/>
    <property type="match status" value="1"/>
</dbReference>
<dbReference type="NCBIfam" id="NF005363">
    <property type="entry name" value="PRK06876.1"/>
    <property type="match status" value="1"/>
</dbReference>
<dbReference type="Pfam" id="PF00137">
    <property type="entry name" value="ATP-synt_C"/>
    <property type="match status" value="1"/>
</dbReference>
<dbReference type="PRINTS" id="PR00124">
    <property type="entry name" value="ATPASEC"/>
</dbReference>
<dbReference type="SUPFAM" id="SSF81333">
    <property type="entry name" value="F1F0 ATP synthase subunit C"/>
    <property type="match status" value="1"/>
</dbReference>
<dbReference type="PROSITE" id="PS00605">
    <property type="entry name" value="ATPASE_C"/>
    <property type="match status" value="1"/>
</dbReference>
<name>ATPL_PSEPK</name>